<organism>
    <name type="scientific">Salmonella paratyphi A (strain ATCC 9150 / SARB42)</name>
    <dbReference type="NCBI Taxonomy" id="295319"/>
    <lineage>
        <taxon>Bacteria</taxon>
        <taxon>Pseudomonadati</taxon>
        <taxon>Pseudomonadota</taxon>
        <taxon>Gammaproteobacteria</taxon>
        <taxon>Enterobacterales</taxon>
        <taxon>Enterobacteriaceae</taxon>
        <taxon>Salmonella</taxon>
    </lineage>
</organism>
<evidence type="ECO:0000255" key="1">
    <source>
        <dbReference type="HAMAP-Rule" id="MF_01062"/>
    </source>
</evidence>
<accession>Q5PH77</accession>
<dbReference type="EC" id="2.7.11.33" evidence="1"/>
<dbReference type="EC" id="2.7.4.28" evidence="1"/>
<dbReference type="EMBL" id="CP000026">
    <property type="protein sequence ID" value="AAV77428.1"/>
    <property type="molecule type" value="Genomic_DNA"/>
</dbReference>
<dbReference type="RefSeq" id="WP_000370992.1">
    <property type="nucleotide sequence ID" value="NC_006511.1"/>
</dbReference>
<dbReference type="SMR" id="Q5PH77"/>
<dbReference type="KEGG" id="spt:SPA1495"/>
<dbReference type="HOGENOM" id="CLU_046206_1_0_6"/>
<dbReference type="Proteomes" id="UP000008185">
    <property type="component" value="Chromosome"/>
</dbReference>
<dbReference type="GO" id="GO:0043531">
    <property type="term" value="F:ADP binding"/>
    <property type="evidence" value="ECO:0007669"/>
    <property type="project" value="UniProtKB-UniRule"/>
</dbReference>
<dbReference type="GO" id="GO:0005524">
    <property type="term" value="F:ATP binding"/>
    <property type="evidence" value="ECO:0007669"/>
    <property type="project" value="InterPro"/>
</dbReference>
<dbReference type="GO" id="GO:0016776">
    <property type="term" value="F:phosphotransferase activity, phosphate group as acceptor"/>
    <property type="evidence" value="ECO:0007669"/>
    <property type="project" value="UniProtKB-UniRule"/>
</dbReference>
<dbReference type="GO" id="GO:0004674">
    <property type="term" value="F:protein serine/threonine kinase activity"/>
    <property type="evidence" value="ECO:0007669"/>
    <property type="project" value="UniProtKB-UniRule"/>
</dbReference>
<dbReference type="HAMAP" id="MF_01062">
    <property type="entry name" value="PSRP"/>
    <property type="match status" value="1"/>
</dbReference>
<dbReference type="InterPro" id="IPR005177">
    <property type="entry name" value="Kinase-pyrophosphorylase"/>
</dbReference>
<dbReference type="InterPro" id="IPR026530">
    <property type="entry name" value="PSRP"/>
</dbReference>
<dbReference type="NCBIfam" id="NF003742">
    <property type="entry name" value="PRK05339.1"/>
    <property type="match status" value="1"/>
</dbReference>
<dbReference type="PANTHER" id="PTHR31756">
    <property type="entry name" value="PYRUVATE, PHOSPHATE DIKINASE REGULATORY PROTEIN 1, CHLOROPLASTIC"/>
    <property type="match status" value="1"/>
</dbReference>
<dbReference type="PANTHER" id="PTHR31756:SF3">
    <property type="entry name" value="PYRUVATE, PHOSPHATE DIKINASE REGULATORY PROTEIN 1, CHLOROPLASTIC"/>
    <property type="match status" value="1"/>
</dbReference>
<dbReference type="Pfam" id="PF03618">
    <property type="entry name" value="Kinase-PPPase"/>
    <property type="match status" value="1"/>
</dbReference>
<feature type="chain" id="PRO_0000196706" description="Phosphoenolpyruvate synthase regulatory protein">
    <location>
        <begin position="1"/>
        <end position="277"/>
    </location>
</feature>
<feature type="binding site" evidence="1">
    <location>
        <begin position="157"/>
        <end position="164"/>
    </location>
    <ligand>
        <name>ADP</name>
        <dbReference type="ChEBI" id="CHEBI:456216"/>
    </ligand>
</feature>
<comment type="function">
    <text evidence="1">Bifunctional serine/threonine kinase and phosphorylase involved in the regulation of the phosphoenolpyruvate synthase (PEPS) by catalyzing its phosphorylation/dephosphorylation.</text>
</comment>
<comment type="catalytic activity">
    <reaction evidence="1">
        <text>[pyruvate, water dikinase] + ADP = [pyruvate, water dikinase]-phosphate + AMP + H(+)</text>
        <dbReference type="Rhea" id="RHEA:46020"/>
        <dbReference type="Rhea" id="RHEA-COMP:11425"/>
        <dbReference type="Rhea" id="RHEA-COMP:11426"/>
        <dbReference type="ChEBI" id="CHEBI:15378"/>
        <dbReference type="ChEBI" id="CHEBI:43176"/>
        <dbReference type="ChEBI" id="CHEBI:68546"/>
        <dbReference type="ChEBI" id="CHEBI:456215"/>
        <dbReference type="ChEBI" id="CHEBI:456216"/>
        <dbReference type="EC" id="2.7.11.33"/>
    </reaction>
</comment>
<comment type="catalytic activity">
    <reaction evidence="1">
        <text>[pyruvate, water dikinase]-phosphate + phosphate + H(+) = [pyruvate, water dikinase] + diphosphate</text>
        <dbReference type="Rhea" id="RHEA:48580"/>
        <dbReference type="Rhea" id="RHEA-COMP:11425"/>
        <dbReference type="Rhea" id="RHEA-COMP:11426"/>
        <dbReference type="ChEBI" id="CHEBI:15378"/>
        <dbReference type="ChEBI" id="CHEBI:33019"/>
        <dbReference type="ChEBI" id="CHEBI:43176"/>
        <dbReference type="ChEBI" id="CHEBI:43474"/>
        <dbReference type="ChEBI" id="CHEBI:68546"/>
        <dbReference type="EC" id="2.7.4.28"/>
    </reaction>
</comment>
<comment type="similarity">
    <text evidence="1">Belongs to the pyruvate, phosphate/water dikinase regulatory protein family. PSRP subfamily.</text>
</comment>
<gene>
    <name evidence="1" type="primary">ppsR</name>
    <name type="ordered locus">SPA1495</name>
</gene>
<reference key="1">
    <citation type="journal article" date="2004" name="Nat. Genet.">
        <title>Comparison of genome degradation in Paratyphi A and Typhi, human-restricted serovars of Salmonella enterica that cause typhoid.</title>
        <authorList>
            <person name="McClelland M."/>
            <person name="Sanderson K.E."/>
            <person name="Clifton S.W."/>
            <person name="Latreille P."/>
            <person name="Porwollik S."/>
            <person name="Sabo A."/>
            <person name="Meyer R."/>
            <person name="Bieri T."/>
            <person name="Ozersky P."/>
            <person name="McLellan M."/>
            <person name="Harkins C.R."/>
            <person name="Wang C."/>
            <person name="Nguyen C."/>
            <person name="Berghoff A."/>
            <person name="Elliott G."/>
            <person name="Kohlberg S."/>
            <person name="Strong C."/>
            <person name="Du F."/>
            <person name="Carter J."/>
            <person name="Kremizki C."/>
            <person name="Layman D."/>
            <person name="Leonard S."/>
            <person name="Sun H."/>
            <person name="Fulton L."/>
            <person name="Nash W."/>
            <person name="Miner T."/>
            <person name="Minx P."/>
            <person name="Delehaunty K."/>
            <person name="Fronick C."/>
            <person name="Magrini V."/>
            <person name="Nhan M."/>
            <person name="Warren W."/>
            <person name="Florea L."/>
            <person name="Spieth J."/>
            <person name="Wilson R.K."/>
        </authorList>
    </citation>
    <scope>NUCLEOTIDE SEQUENCE [LARGE SCALE GENOMIC DNA]</scope>
    <source>
        <strain>ATCC 9150 / SARB42</strain>
    </source>
</reference>
<name>PSRP_SALPA</name>
<protein>
    <recommendedName>
        <fullName evidence="1">Phosphoenolpyruvate synthase regulatory protein</fullName>
        <shortName evidence="1">PEP synthase regulatory protein</shortName>
        <shortName evidence="1">PSRP</shortName>
        <ecNumber evidence="1">2.7.11.33</ecNumber>
        <ecNumber evidence="1">2.7.4.28</ecNumber>
    </recommendedName>
    <alternativeName>
        <fullName evidence="1">Pyruvate, water dikinase regulatory protein</fullName>
    </alternativeName>
</protein>
<sequence>MDNVVDRHVFYISDGTAITAEVLGHAVMSQFPVTISSITLPFVENESRARAVKDQIDAIYQQTGVRPLVFYSIVLPEIRAIILQSEGFCQDIVQALVAPLQQEMKLDPTPIAHRTHGLNPGNLNKYDARIAAIDYTLAHDDGISLRNLDQAQVILLGVSRCGKTPTSLYLAMQFGIRAANYPFIADDMDNLTLPTSLKPLQHKLFGLTIDPERLAAIREERRENSRYASLRQCRMEVAEVEALYRKNQIPCLNSTNYSVEEIATKILDIMGLNRRMY</sequence>
<keyword id="KW-0418">Kinase</keyword>
<keyword id="KW-0547">Nucleotide-binding</keyword>
<keyword id="KW-0723">Serine/threonine-protein kinase</keyword>
<keyword id="KW-0808">Transferase</keyword>
<proteinExistence type="inferred from homology"/>